<protein>
    <recommendedName>
        <fullName evidence="1">1-(5-phosphoribosyl)-5-[(5-phosphoribosylamino)methylideneamino] imidazole-4-carboxamide isomerase</fullName>
        <ecNumber evidence="1">5.3.1.16</ecNumber>
    </recommendedName>
    <alternativeName>
        <fullName evidence="1">Phosphoribosylformimino-5-aminoimidazole carboxamide ribotide isomerase</fullName>
    </alternativeName>
</protein>
<name>HIS4_SHEPW</name>
<proteinExistence type="inferred from homology"/>
<accession>B8CR53</accession>
<organism>
    <name type="scientific">Shewanella piezotolerans (strain WP3 / JCM 13877)</name>
    <dbReference type="NCBI Taxonomy" id="225849"/>
    <lineage>
        <taxon>Bacteria</taxon>
        <taxon>Pseudomonadati</taxon>
        <taxon>Pseudomonadota</taxon>
        <taxon>Gammaproteobacteria</taxon>
        <taxon>Alteromonadales</taxon>
        <taxon>Shewanellaceae</taxon>
        <taxon>Shewanella</taxon>
    </lineage>
</organism>
<dbReference type="EC" id="5.3.1.16" evidence="1"/>
<dbReference type="EMBL" id="CP000472">
    <property type="protein sequence ID" value="ACJ29725.1"/>
    <property type="molecule type" value="Genomic_DNA"/>
</dbReference>
<dbReference type="RefSeq" id="WP_020913079.1">
    <property type="nucleotide sequence ID" value="NC_011566.1"/>
</dbReference>
<dbReference type="SMR" id="B8CR53"/>
<dbReference type="STRING" id="225849.swp_3007"/>
<dbReference type="KEGG" id="swp:swp_3007"/>
<dbReference type="eggNOG" id="COG0106">
    <property type="taxonomic scope" value="Bacteria"/>
</dbReference>
<dbReference type="HOGENOM" id="CLU_048577_1_2_6"/>
<dbReference type="OrthoDB" id="9807749at2"/>
<dbReference type="UniPathway" id="UPA00031">
    <property type="reaction ID" value="UER00009"/>
</dbReference>
<dbReference type="Proteomes" id="UP000000753">
    <property type="component" value="Chromosome"/>
</dbReference>
<dbReference type="GO" id="GO:0005737">
    <property type="term" value="C:cytoplasm"/>
    <property type="evidence" value="ECO:0007669"/>
    <property type="project" value="UniProtKB-SubCell"/>
</dbReference>
<dbReference type="GO" id="GO:0003949">
    <property type="term" value="F:1-(5-phosphoribosyl)-5-[(5-phosphoribosylamino)methylideneamino]imidazole-4-carboxamide isomerase activity"/>
    <property type="evidence" value="ECO:0007669"/>
    <property type="project" value="UniProtKB-UniRule"/>
</dbReference>
<dbReference type="GO" id="GO:0000105">
    <property type="term" value="P:L-histidine biosynthetic process"/>
    <property type="evidence" value="ECO:0007669"/>
    <property type="project" value="UniProtKB-UniRule"/>
</dbReference>
<dbReference type="GO" id="GO:0000162">
    <property type="term" value="P:L-tryptophan biosynthetic process"/>
    <property type="evidence" value="ECO:0007669"/>
    <property type="project" value="TreeGrafter"/>
</dbReference>
<dbReference type="CDD" id="cd04732">
    <property type="entry name" value="HisA"/>
    <property type="match status" value="1"/>
</dbReference>
<dbReference type="FunFam" id="3.20.20.70:FF:000009">
    <property type="entry name" value="1-(5-phosphoribosyl)-5-[(5-phosphoribosylamino)methylideneamino] imidazole-4-carboxamide isomerase"/>
    <property type="match status" value="1"/>
</dbReference>
<dbReference type="Gene3D" id="3.20.20.70">
    <property type="entry name" value="Aldolase class I"/>
    <property type="match status" value="1"/>
</dbReference>
<dbReference type="HAMAP" id="MF_01014">
    <property type="entry name" value="HisA"/>
    <property type="match status" value="1"/>
</dbReference>
<dbReference type="InterPro" id="IPR013785">
    <property type="entry name" value="Aldolase_TIM"/>
</dbReference>
<dbReference type="InterPro" id="IPR006062">
    <property type="entry name" value="His_biosynth"/>
</dbReference>
<dbReference type="InterPro" id="IPR006063">
    <property type="entry name" value="HisA_bact_arch"/>
</dbReference>
<dbReference type="InterPro" id="IPR044524">
    <property type="entry name" value="Isoase_HisA-like"/>
</dbReference>
<dbReference type="InterPro" id="IPR023016">
    <property type="entry name" value="Isoase_HisA-like_bact"/>
</dbReference>
<dbReference type="InterPro" id="IPR011060">
    <property type="entry name" value="RibuloseP-bd_barrel"/>
</dbReference>
<dbReference type="NCBIfam" id="TIGR00007">
    <property type="entry name" value="1-(5-phosphoribosyl)-5-[(5-phosphoribosylamino)methylideneamino]imidazole-4-carboxamide isomerase"/>
    <property type="match status" value="1"/>
</dbReference>
<dbReference type="PANTHER" id="PTHR43090">
    <property type="entry name" value="1-(5-PHOSPHORIBOSYL)-5-[(5-PHOSPHORIBOSYLAMINO)METHYLIDENEAMINO] IMIDAZOLE-4-CARBOXAMIDE ISOMERASE"/>
    <property type="match status" value="1"/>
</dbReference>
<dbReference type="PANTHER" id="PTHR43090:SF2">
    <property type="entry name" value="1-(5-PHOSPHORIBOSYL)-5-[(5-PHOSPHORIBOSYLAMINO)METHYLIDENEAMINO] IMIDAZOLE-4-CARBOXAMIDE ISOMERASE"/>
    <property type="match status" value="1"/>
</dbReference>
<dbReference type="Pfam" id="PF00977">
    <property type="entry name" value="His_biosynth"/>
    <property type="match status" value="1"/>
</dbReference>
<dbReference type="SUPFAM" id="SSF51366">
    <property type="entry name" value="Ribulose-phoshate binding barrel"/>
    <property type="match status" value="1"/>
</dbReference>
<reference key="1">
    <citation type="journal article" date="2008" name="PLoS ONE">
        <title>Environmental adaptation: genomic analysis of the piezotolerant and psychrotolerant deep-sea iron reducing bacterium Shewanella piezotolerans WP3.</title>
        <authorList>
            <person name="Wang F."/>
            <person name="Wang J."/>
            <person name="Jian H."/>
            <person name="Zhang B."/>
            <person name="Li S."/>
            <person name="Wang F."/>
            <person name="Zeng X."/>
            <person name="Gao L."/>
            <person name="Bartlett D.H."/>
            <person name="Yu J."/>
            <person name="Hu S."/>
            <person name="Xiao X."/>
        </authorList>
    </citation>
    <scope>NUCLEOTIDE SEQUENCE [LARGE SCALE GENOMIC DNA]</scope>
    <source>
        <strain>WP3 / JCM 13877</strain>
    </source>
</reference>
<evidence type="ECO:0000255" key="1">
    <source>
        <dbReference type="HAMAP-Rule" id="MF_01014"/>
    </source>
</evidence>
<gene>
    <name evidence="1" type="primary">hisA</name>
    <name type="ordered locus">swp_3007</name>
</gene>
<comment type="catalytic activity">
    <reaction evidence="1">
        <text>1-(5-phospho-beta-D-ribosyl)-5-[(5-phospho-beta-D-ribosylamino)methylideneamino]imidazole-4-carboxamide = 5-[(5-phospho-1-deoxy-D-ribulos-1-ylimino)methylamino]-1-(5-phospho-beta-D-ribosyl)imidazole-4-carboxamide</text>
        <dbReference type="Rhea" id="RHEA:15469"/>
        <dbReference type="ChEBI" id="CHEBI:58435"/>
        <dbReference type="ChEBI" id="CHEBI:58525"/>
        <dbReference type="EC" id="5.3.1.16"/>
    </reaction>
</comment>
<comment type="pathway">
    <text evidence="1">Amino-acid biosynthesis; L-histidine biosynthesis; L-histidine from 5-phospho-alpha-D-ribose 1-diphosphate: step 4/9.</text>
</comment>
<comment type="subcellular location">
    <subcellularLocation>
        <location evidence="1">Cytoplasm</location>
    </subcellularLocation>
</comment>
<comment type="similarity">
    <text evidence="1">Belongs to the HisA/HisF family.</text>
</comment>
<keyword id="KW-0028">Amino-acid biosynthesis</keyword>
<keyword id="KW-0963">Cytoplasm</keyword>
<keyword id="KW-0368">Histidine biosynthesis</keyword>
<keyword id="KW-0413">Isomerase</keyword>
<feature type="chain" id="PRO_1000190557" description="1-(5-phosphoribosyl)-5-[(5-phosphoribosylamino)methylideneamino] imidazole-4-carboxamide isomerase">
    <location>
        <begin position="1"/>
        <end position="245"/>
    </location>
</feature>
<feature type="active site" description="Proton acceptor" evidence="1">
    <location>
        <position position="7"/>
    </location>
</feature>
<feature type="active site" description="Proton donor" evidence="1">
    <location>
        <position position="129"/>
    </location>
</feature>
<sequence>MIIPAIDLIEGQVVRLYQGDYNQKTTFNLSPLEQLQSYQEQGADLLHIVDLTGAKDPMKRQTQLIASLVRELDTPIQVGGGVRTEAQLSELLEIGVSRVVIGSLAVKEPELVKSWFVKYGSDAICLALDVNINDQGEKIVAVSGWQSGGGKTLESLVAEFSTVGLKHALVTDISRDGTLKGANTELYQEISTAYPEINWQASGGIATLADVNAVKESGANGIIIGKALLINQFTVEEAITCWPNA</sequence>